<comment type="function">
    <text evidence="1">Associates with the EF-Tu.GDP complex and induces the exchange of GDP to GTP. It remains bound to the aminoacyl-tRNA.EF-Tu.GTP complex up to the GTP hydrolysis stage on the ribosome.</text>
</comment>
<comment type="subcellular location">
    <subcellularLocation>
        <location evidence="1">Cytoplasm</location>
    </subcellularLocation>
</comment>
<comment type="similarity">
    <text evidence="1">Belongs to the EF-Ts family.</text>
</comment>
<keyword id="KW-0963">Cytoplasm</keyword>
<keyword id="KW-0251">Elongation factor</keyword>
<keyword id="KW-0648">Protein biosynthesis</keyword>
<keyword id="KW-1185">Reference proteome</keyword>
<name>EFTS_CHRVO</name>
<evidence type="ECO:0000255" key="1">
    <source>
        <dbReference type="HAMAP-Rule" id="MF_00050"/>
    </source>
</evidence>
<accession>Q7NVZ3</accession>
<sequence>MAEITAKMVSDLRVATGLGMMECKKALVEAEGDFAKAEEILRIKSGSKASKMAGRLAAEGIIGSYVEGGVGALVEVNCETDFVAKDPTFIALANAAAKAVAIANPADVEALAAVEVDGQQVEEIRKAAIAKLGENMTIRRFVRYQTEGAISTYLHGAKIGVIVDFTGPEQVGKDVAMHVAASKPICVSKDQVSAETLDQERKIYSAQAAESGKPADIVAKMVEGRINKFLAEVTLLGQPFVKNPDVTVEKLLAEQKASVKAFAMFVVGEGIEKKVVDYAAEVAAAAKL</sequence>
<protein>
    <recommendedName>
        <fullName evidence="1">Elongation factor Ts</fullName>
        <shortName evidence="1">EF-Ts</shortName>
    </recommendedName>
</protein>
<organism>
    <name type="scientific">Chromobacterium violaceum (strain ATCC 12472 / DSM 30191 / JCM 1249 / CCUG 213 / NBRC 12614 / NCIMB 9131 / NCTC 9757 / MK)</name>
    <dbReference type="NCBI Taxonomy" id="243365"/>
    <lineage>
        <taxon>Bacteria</taxon>
        <taxon>Pseudomonadati</taxon>
        <taxon>Pseudomonadota</taxon>
        <taxon>Betaproteobacteria</taxon>
        <taxon>Neisseriales</taxon>
        <taxon>Chromobacteriaceae</taxon>
        <taxon>Chromobacterium</taxon>
    </lineage>
</organism>
<gene>
    <name evidence="1" type="primary">tsf</name>
    <name type="ordered locus">CV_2197</name>
</gene>
<dbReference type="EMBL" id="AE016825">
    <property type="protein sequence ID" value="AAQ59870.1"/>
    <property type="molecule type" value="Genomic_DNA"/>
</dbReference>
<dbReference type="RefSeq" id="WP_011135745.1">
    <property type="nucleotide sequence ID" value="NC_005085.1"/>
</dbReference>
<dbReference type="SMR" id="Q7NVZ3"/>
<dbReference type="STRING" id="243365.CV_2197"/>
<dbReference type="KEGG" id="cvi:CV_2197"/>
<dbReference type="eggNOG" id="COG0264">
    <property type="taxonomic scope" value="Bacteria"/>
</dbReference>
<dbReference type="HOGENOM" id="CLU_047155_0_2_4"/>
<dbReference type="OrthoDB" id="9808348at2"/>
<dbReference type="Proteomes" id="UP000001424">
    <property type="component" value="Chromosome"/>
</dbReference>
<dbReference type="GO" id="GO:0005737">
    <property type="term" value="C:cytoplasm"/>
    <property type="evidence" value="ECO:0007669"/>
    <property type="project" value="UniProtKB-SubCell"/>
</dbReference>
<dbReference type="GO" id="GO:0003746">
    <property type="term" value="F:translation elongation factor activity"/>
    <property type="evidence" value="ECO:0007669"/>
    <property type="project" value="UniProtKB-UniRule"/>
</dbReference>
<dbReference type="CDD" id="cd14275">
    <property type="entry name" value="UBA_EF-Ts"/>
    <property type="match status" value="1"/>
</dbReference>
<dbReference type="FunFam" id="1.10.286.20:FF:000001">
    <property type="entry name" value="Elongation factor Ts"/>
    <property type="match status" value="1"/>
</dbReference>
<dbReference type="FunFam" id="1.10.8.10:FF:000001">
    <property type="entry name" value="Elongation factor Ts"/>
    <property type="match status" value="1"/>
</dbReference>
<dbReference type="Gene3D" id="1.10.286.20">
    <property type="match status" value="1"/>
</dbReference>
<dbReference type="Gene3D" id="1.10.8.10">
    <property type="entry name" value="DNA helicase RuvA subunit, C-terminal domain"/>
    <property type="match status" value="1"/>
</dbReference>
<dbReference type="Gene3D" id="3.30.479.20">
    <property type="entry name" value="Elongation factor Ts, dimerisation domain"/>
    <property type="match status" value="2"/>
</dbReference>
<dbReference type="HAMAP" id="MF_00050">
    <property type="entry name" value="EF_Ts"/>
    <property type="match status" value="1"/>
</dbReference>
<dbReference type="InterPro" id="IPR036402">
    <property type="entry name" value="EF-Ts_dimer_sf"/>
</dbReference>
<dbReference type="InterPro" id="IPR001816">
    <property type="entry name" value="Transl_elong_EFTs/EF1B"/>
</dbReference>
<dbReference type="InterPro" id="IPR014039">
    <property type="entry name" value="Transl_elong_EFTs/EF1B_dimer"/>
</dbReference>
<dbReference type="InterPro" id="IPR018101">
    <property type="entry name" value="Transl_elong_Ts_CS"/>
</dbReference>
<dbReference type="InterPro" id="IPR009060">
    <property type="entry name" value="UBA-like_sf"/>
</dbReference>
<dbReference type="NCBIfam" id="TIGR00116">
    <property type="entry name" value="tsf"/>
    <property type="match status" value="1"/>
</dbReference>
<dbReference type="PANTHER" id="PTHR11741">
    <property type="entry name" value="ELONGATION FACTOR TS"/>
    <property type="match status" value="1"/>
</dbReference>
<dbReference type="PANTHER" id="PTHR11741:SF0">
    <property type="entry name" value="ELONGATION FACTOR TS, MITOCHONDRIAL"/>
    <property type="match status" value="1"/>
</dbReference>
<dbReference type="Pfam" id="PF00889">
    <property type="entry name" value="EF_TS"/>
    <property type="match status" value="1"/>
</dbReference>
<dbReference type="SUPFAM" id="SSF54713">
    <property type="entry name" value="Elongation factor Ts (EF-Ts), dimerisation domain"/>
    <property type="match status" value="2"/>
</dbReference>
<dbReference type="SUPFAM" id="SSF46934">
    <property type="entry name" value="UBA-like"/>
    <property type="match status" value="1"/>
</dbReference>
<dbReference type="PROSITE" id="PS01126">
    <property type="entry name" value="EF_TS_1"/>
    <property type="match status" value="1"/>
</dbReference>
<dbReference type="PROSITE" id="PS01127">
    <property type="entry name" value="EF_TS_2"/>
    <property type="match status" value="1"/>
</dbReference>
<feature type="chain" id="PRO_0000161106" description="Elongation factor Ts">
    <location>
        <begin position="1"/>
        <end position="288"/>
    </location>
</feature>
<feature type="region of interest" description="Involved in Mg(2+) ion dislocation from EF-Tu" evidence="1">
    <location>
        <begin position="80"/>
        <end position="83"/>
    </location>
</feature>
<reference key="1">
    <citation type="journal article" date="2003" name="Proc. Natl. Acad. Sci. U.S.A.">
        <title>The complete genome sequence of Chromobacterium violaceum reveals remarkable and exploitable bacterial adaptability.</title>
        <authorList>
            <person name="Vasconcelos A.T.R."/>
            <person name="de Almeida D.F."/>
            <person name="Hungria M."/>
            <person name="Guimaraes C.T."/>
            <person name="Antonio R.V."/>
            <person name="Almeida F.C."/>
            <person name="de Almeida L.G.P."/>
            <person name="de Almeida R."/>
            <person name="Alves-Gomes J.A."/>
            <person name="Andrade E.M."/>
            <person name="Araripe J."/>
            <person name="de Araujo M.F.F."/>
            <person name="Astolfi-Filho S."/>
            <person name="Azevedo V."/>
            <person name="Baptista A.J."/>
            <person name="Bataus L.A.M."/>
            <person name="Batista J.S."/>
            <person name="Belo A."/>
            <person name="van den Berg C."/>
            <person name="Bogo M."/>
            <person name="Bonatto S."/>
            <person name="Bordignon J."/>
            <person name="Brigido M.M."/>
            <person name="Brito C.A."/>
            <person name="Brocchi M."/>
            <person name="Burity H.A."/>
            <person name="Camargo A.A."/>
            <person name="Cardoso D.D.P."/>
            <person name="Carneiro N.P."/>
            <person name="Carraro D.M."/>
            <person name="Carvalho C.M.B."/>
            <person name="Cascardo J.C.M."/>
            <person name="Cavada B.S."/>
            <person name="Chueire L.M.O."/>
            <person name="Creczynski-Pasa T.B."/>
            <person name="Cunha-Junior N.C."/>
            <person name="Fagundes N."/>
            <person name="Falcao C.L."/>
            <person name="Fantinatti F."/>
            <person name="Farias I.P."/>
            <person name="Felipe M.S.S."/>
            <person name="Ferrari L.P."/>
            <person name="Ferro J.A."/>
            <person name="Ferro M.I.T."/>
            <person name="Franco G.R."/>
            <person name="Freitas N.S.A."/>
            <person name="Furlan L.R."/>
            <person name="Gazzinelli R.T."/>
            <person name="Gomes E.A."/>
            <person name="Goncalves P.R."/>
            <person name="Grangeiro T.B."/>
            <person name="Grattapaglia D."/>
            <person name="Grisard E.C."/>
            <person name="Hanna E.S."/>
            <person name="Jardim S.N."/>
            <person name="Laurino J."/>
            <person name="Leoi L.C.T."/>
            <person name="Lima L.F.A."/>
            <person name="Loureiro M.F."/>
            <person name="Lyra M.C.C.P."/>
            <person name="Madeira H.M.F."/>
            <person name="Manfio G.P."/>
            <person name="Maranhao A.Q."/>
            <person name="Martins W.S."/>
            <person name="di Mauro S.M.Z."/>
            <person name="de Medeiros S.R.B."/>
            <person name="Meissner R.V."/>
            <person name="Moreira M.A.M."/>
            <person name="Nascimento F.F."/>
            <person name="Nicolas M.F."/>
            <person name="Oliveira J.G."/>
            <person name="Oliveira S.C."/>
            <person name="Paixao R.F.C."/>
            <person name="Parente J.A."/>
            <person name="Pedrosa F.O."/>
            <person name="Pena S.D.J."/>
            <person name="Pereira J.O."/>
            <person name="Pereira M."/>
            <person name="Pinto L.S.R.C."/>
            <person name="Pinto L.S."/>
            <person name="Porto J.I.R."/>
            <person name="Potrich D.P."/>
            <person name="Ramalho-Neto C.E."/>
            <person name="Reis A.M.M."/>
            <person name="Rigo L.U."/>
            <person name="Rondinelli E."/>
            <person name="Santos E.B.P."/>
            <person name="Santos F.R."/>
            <person name="Schneider M.P.C."/>
            <person name="Seuanez H.N."/>
            <person name="Silva A.M.R."/>
            <person name="da Silva A.L.C."/>
            <person name="Silva D.W."/>
            <person name="Silva R."/>
            <person name="Simoes I.C."/>
            <person name="Simon D."/>
            <person name="Soares C.M.A."/>
            <person name="Soares R.B.A."/>
            <person name="Souza E.M."/>
            <person name="Souza K.R.L."/>
            <person name="Souza R.C."/>
            <person name="Steffens M.B.R."/>
            <person name="Steindel M."/>
            <person name="Teixeira S.R."/>
            <person name="Urmenyi T."/>
            <person name="Vettore A."/>
            <person name="Wassem R."/>
            <person name="Zaha A."/>
            <person name="Simpson A.J.G."/>
        </authorList>
    </citation>
    <scope>NUCLEOTIDE SEQUENCE [LARGE SCALE GENOMIC DNA]</scope>
    <source>
        <strain>ATCC 12472 / DSM 30191 / JCM 1249 / CCUG 213 / NBRC 12614 / NCIMB 9131 / NCTC 9757 / MK</strain>
    </source>
</reference>
<proteinExistence type="inferred from homology"/>